<evidence type="ECO:0000255" key="1">
    <source>
        <dbReference type="HAMAP-Rule" id="MF_00110"/>
    </source>
</evidence>
<gene>
    <name evidence="1" type="primary">aroB</name>
    <name type="ordered locus">RHOS4_14260</name>
    <name type="ORF">RSP_2818</name>
</gene>
<protein>
    <recommendedName>
        <fullName evidence="1">3-dehydroquinate synthase</fullName>
        <shortName evidence="1">DHQS</shortName>
        <ecNumber evidence="1">4.2.3.4</ecNumber>
    </recommendedName>
</protein>
<proteinExistence type="inferred from homology"/>
<name>AROB_CERS4</name>
<comment type="function">
    <text evidence="1">Catalyzes the conversion of 3-deoxy-D-arabino-heptulosonate 7-phosphate (DAHP) to dehydroquinate (DHQ).</text>
</comment>
<comment type="catalytic activity">
    <reaction evidence="1">
        <text>7-phospho-2-dehydro-3-deoxy-D-arabino-heptonate = 3-dehydroquinate + phosphate</text>
        <dbReference type="Rhea" id="RHEA:21968"/>
        <dbReference type="ChEBI" id="CHEBI:32364"/>
        <dbReference type="ChEBI" id="CHEBI:43474"/>
        <dbReference type="ChEBI" id="CHEBI:58394"/>
        <dbReference type="EC" id="4.2.3.4"/>
    </reaction>
</comment>
<comment type="cofactor">
    <cofactor evidence="1">
        <name>Co(2+)</name>
        <dbReference type="ChEBI" id="CHEBI:48828"/>
    </cofactor>
    <cofactor evidence="1">
        <name>Zn(2+)</name>
        <dbReference type="ChEBI" id="CHEBI:29105"/>
    </cofactor>
    <text evidence="1">Binds 1 divalent metal cation per subunit. Can use either Co(2+) or Zn(2+).</text>
</comment>
<comment type="cofactor">
    <cofactor evidence="1">
        <name>NAD(+)</name>
        <dbReference type="ChEBI" id="CHEBI:57540"/>
    </cofactor>
</comment>
<comment type="pathway">
    <text evidence="1">Metabolic intermediate biosynthesis; chorismate biosynthesis; chorismate from D-erythrose 4-phosphate and phosphoenolpyruvate: step 2/7.</text>
</comment>
<comment type="subcellular location">
    <subcellularLocation>
        <location evidence="1">Cytoplasm</location>
    </subcellularLocation>
</comment>
<comment type="similarity">
    <text evidence="1">Belongs to the sugar phosphate cyclases superfamily. Dehydroquinate synthase family.</text>
</comment>
<accession>Q3J2J0</accession>
<organism>
    <name type="scientific">Cereibacter sphaeroides (strain ATCC 17023 / DSM 158 / JCM 6121 / CCUG 31486 / LMG 2827 / NBRC 12203 / NCIMB 8253 / ATH 2.4.1.)</name>
    <name type="common">Rhodobacter sphaeroides</name>
    <dbReference type="NCBI Taxonomy" id="272943"/>
    <lineage>
        <taxon>Bacteria</taxon>
        <taxon>Pseudomonadati</taxon>
        <taxon>Pseudomonadota</taxon>
        <taxon>Alphaproteobacteria</taxon>
        <taxon>Rhodobacterales</taxon>
        <taxon>Paracoccaceae</taxon>
        <taxon>Cereibacter</taxon>
    </lineage>
</organism>
<reference key="1">
    <citation type="submission" date="2005-09" db="EMBL/GenBank/DDBJ databases">
        <title>Complete sequence of chromosome 1 of Rhodobacter sphaeroides 2.4.1.</title>
        <authorList>
            <person name="Copeland A."/>
            <person name="Lucas S."/>
            <person name="Lapidus A."/>
            <person name="Barry K."/>
            <person name="Detter J.C."/>
            <person name="Glavina T."/>
            <person name="Hammon N."/>
            <person name="Israni S."/>
            <person name="Pitluck S."/>
            <person name="Richardson P."/>
            <person name="Mackenzie C."/>
            <person name="Choudhary M."/>
            <person name="Larimer F."/>
            <person name="Hauser L.J."/>
            <person name="Land M."/>
            <person name="Donohue T.J."/>
            <person name="Kaplan S."/>
        </authorList>
    </citation>
    <scope>NUCLEOTIDE SEQUENCE [LARGE SCALE GENOMIC DNA]</scope>
    <source>
        <strain>ATCC 17023 / DSM 158 / JCM 6121 / CCUG 31486 / LMG 2827 / NBRC 12203 / NCIMB 8253 / ATH 2.4.1.</strain>
    </source>
</reference>
<keyword id="KW-0028">Amino-acid biosynthesis</keyword>
<keyword id="KW-0057">Aromatic amino acid biosynthesis</keyword>
<keyword id="KW-0170">Cobalt</keyword>
<keyword id="KW-0963">Cytoplasm</keyword>
<keyword id="KW-0456">Lyase</keyword>
<keyword id="KW-0479">Metal-binding</keyword>
<keyword id="KW-0520">NAD</keyword>
<keyword id="KW-0547">Nucleotide-binding</keyword>
<keyword id="KW-1185">Reference proteome</keyword>
<keyword id="KW-0862">Zinc</keyword>
<sequence length="370" mass="39425">MTVDAVRVELGARAYEVRIGPGLIARAGAEIAPLLRRPKVAILTDETVAGLHLDPFRQALAEAGIASSALALPAGEATKGWPQFARAVEWLLEEKVERRDVVVALGGGVIGDLAGFAAAVLRRGVRFVQVPTTLLAQVDSSVGGKTGINTAQGKNLVGAFHQPSLVLADIGVLETLPPRDFRAGYGEVVKYGLLGDADFYEWLEEAGPRLAADAEARQRAVRRSVEMKAEIVARDETEEGDRALLNLGHTFCHALEKATGYSGRLLHGEGVAIGCALAFELSQRLGLCAQEAPSRLRAHLRAMGMKVDLRDIPGDLPSAEALLALMAQDKKVVDGKLRFILARGIGQAFVADDVPGDVVRTLLEDALAQR</sequence>
<feature type="chain" id="PRO_0000231120" description="3-dehydroquinate synthase">
    <location>
        <begin position="1"/>
        <end position="370"/>
    </location>
</feature>
<feature type="binding site" evidence="1">
    <location>
        <begin position="108"/>
        <end position="112"/>
    </location>
    <ligand>
        <name>NAD(+)</name>
        <dbReference type="ChEBI" id="CHEBI:57540"/>
    </ligand>
</feature>
<feature type="binding site" evidence="1">
    <location>
        <begin position="132"/>
        <end position="133"/>
    </location>
    <ligand>
        <name>NAD(+)</name>
        <dbReference type="ChEBI" id="CHEBI:57540"/>
    </ligand>
</feature>
<feature type="binding site" evidence="1">
    <location>
        <position position="145"/>
    </location>
    <ligand>
        <name>NAD(+)</name>
        <dbReference type="ChEBI" id="CHEBI:57540"/>
    </ligand>
</feature>
<feature type="binding site" evidence="1">
    <location>
        <position position="154"/>
    </location>
    <ligand>
        <name>NAD(+)</name>
        <dbReference type="ChEBI" id="CHEBI:57540"/>
    </ligand>
</feature>
<feature type="binding site" evidence="1">
    <location>
        <position position="187"/>
    </location>
    <ligand>
        <name>Zn(2+)</name>
        <dbReference type="ChEBI" id="CHEBI:29105"/>
    </ligand>
</feature>
<feature type="binding site" evidence="1">
    <location>
        <position position="249"/>
    </location>
    <ligand>
        <name>Zn(2+)</name>
        <dbReference type="ChEBI" id="CHEBI:29105"/>
    </ligand>
</feature>
<feature type="binding site" evidence="1">
    <location>
        <position position="267"/>
    </location>
    <ligand>
        <name>Zn(2+)</name>
        <dbReference type="ChEBI" id="CHEBI:29105"/>
    </ligand>
</feature>
<dbReference type="EC" id="4.2.3.4" evidence="1"/>
<dbReference type="EMBL" id="CP000143">
    <property type="protein sequence ID" value="ABA78994.1"/>
    <property type="molecule type" value="Genomic_DNA"/>
</dbReference>
<dbReference type="RefSeq" id="WP_011337780.1">
    <property type="nucleotide sequence ID" value="NC_007493.2"/>
</dbReference>
<dbReference type="RefSeq" id="YP_352895.1">
    <property type="nucleotide sequence ID" value="NC_007493.2"/>
</dbReference>
<dbReference type="SMR" id="Q3J2J0"/>
<dbReference type="STRING" id="272943.RSP_2818"/>
<dbReference type="EnsemblBacteria" id="ABA78994">
    <property type="protein sequence ID" value="ABA78994"/>
    <property type="gene ID" value="RSP_2818"/>
</dbReference>
<dbReference type="GeneID" id="3720572"/>
<dbReference type="KEGG" id="rsp:RSP_2818"/>
<dbReference type="PATRIC" id="fig|272943.9.peg.1764"/>
<dbReference type="eggNOG" id="COG0337">
    <property type="taxonomic scope" value="Bacteria"/>
</dbReference>
<dbReference type="OrthoDB" id="9806583at2"/>
<dbReference type="PhylomeDB" id="Q3J2J0"/>
<dbReference type="UniPathway" id="UPA00053">
    <property type="reaction ID" value="UER00085"/>
</dbReference>
<dbReference type="Proteomes" id="UP000002703">
    <property type="component" value="Chromosome 1"/>
</dbReference>
<dbReference type="GO" id="GO:0005737">
    <property type="term" value="C:cytoplasm"/>
    <property type="evidence" value="ECO:0007669"/>
    <property type="project" value="UniProtKB-SubCell"/>
</dbReference>
<dbReference type="GO" id="GO:0003856">
    <property type="term" value="F:3-dehydroquinate synthase activity"/>
    <property type="evidence" value="ECO:0007669"/>
    <property type="project" value="UniProtKB-UniRule"/>
</dbReference>
<dbReference type="GO" id="GO:0046872">
    <property type="term" value="F:metal ion binding"/>
    <property type="evidence" value="ECO:0007669"/>
    <property type="project" value="UniProtKB-KW"/>
</dbReference>
<dbReference type="GO" id="GO:0000166">
    <property type="term" value="F:nucleotide binding"/>
    <property type="evidence" value="ECO:0007669"/>
    <property type="project" value="UniProtKB-KW"/>
</dbReference>
<dbReference type="GO" id="GO:0008652">
    <property type="term" value="P:amino acid biosynthetic process"/>
    <property type="evidence" value="ECO:0007669"/>
    <property type="project" value="UniProtKB-KW"/>
</dbReference>
<dbReference type="GO" id="GO:0009073">
    <property type="term" value="P:aromatic amino acid family biosynthetic process"/>
    <property type="evidence" value="ECO:0007669"/>
    <property type="project" value="UniProtKB-KW"/>
</dbReference>
<dbReference type="GO" id="GO:0009423">
    <property type="term" value="P:chorismate biosynthetic process"/>
    <property type="evidence" value="ECO:0007669"/>
    <property type="project" value="UniProtKB-UniRule"/>
</dbReference>
<dbReference type="CDD" id="cd08195">
    <property type="entry name" value="DHQS"/>
    <property type="match status" value="1"/>
</dbReference>
<dbReference type="FunFam" id="3.40.50.1970:FF:000007">
    <property type="entry name" value="Pentafunctional AROM polypeptide"/>
    <property type="match status" value="1"/>
</dbReference>
<dbReference type="Gene3D" id="3.40.50.1970">
    <property type="match status" value="1"/>
</dbReference>
<dbReference type="Gene3D" id="1.20.1090.10">
    <property type="entry name" value="Dehydroquinate synthase-like - alpha domain"/>
    <property type="match status" value="1"/>
</dbReference>
<dbReference type="HAMAP" id="MF_00110">
    <property type="entry name" value="DHQ_synthase"/>
    <property type="match status" value="1"/>
</dbReference>
<dbReference type="InterPro" id="IPR050071">
    <property type="entry name" value="Dehydroquinate_synthase"/>
</dbReference>
<dbReference type="InterPro" id="IPR016037">
    <property type="entry name" value="DHQ_synth_AroB"/>
</dbReference>
<dbReference type="InterPro" id="IPR030963">
    <property type="entry name" value="DHQ_synth_fam"/>
</dbReference>
<dbReference type="InterPro" id="IPR030960">
    <property type="entry name" value="DHQS/DOIS_N"/>
</dbReference>
<dbReference type="InterPro" id="IPR056179">
    <property type="entry name" value="DHQS_C"/>
</dbReference>
<dbReference type="NCBIfam" id="TIGR01357">
    <property type="entry name" value="aroB"/>
    <property type="match status" value="1"/>
</dbReference>
<dbReference type="PANTHER" id="PTHR43622">
    <property type="entry name" value="3-DEHYDROQUINATE SYNTHASE"/>
    <property type="match status" value="1"/>
</dbReference>
<dbReference type="PANTHER" id="PTHR43622:SF7">
    <property type="entry name" value="3-DEHYDROQUINATE SYNTHASE, CHLOROPLASTIC"/>
    <property type="match status" value="1"/>
</dbReference>
<dbReference type="Pfam" id="PF01761">
    <property type="entry name" value="DHQ_synthase"/>
    <property type="match status" value="1"/>
</dbReference>
<dbReference type="Pfam" id="PF24621">
    <property type="entry name" value="DHQS_C"/>
    <property type="match status" value="1"/>
</dbReference>
<dbReference type="PIRSF" id="PIRSF001455">
    <property type="entry name" value="DHQ_synth"/>
    <property type="match status" value="1"/>
</dbReference>
<dbReference type="SUPFAM" id="SSF56796">
    <property type="entry name" value="Dehydroquinate synthase-like"/>
    <property type="match status" value="1"/>
</dbReference>